<sequence>ANPICPKIPNPTIRISGRNDLCVDVK</sequence>
<dbReference type="SMR" id="P83573"/>
<dbReference type="GO" id="GO:0090729">
    <property type="term" value="F:toxin activity"/>
    <property type="evidence" value="ECO:0007669"/>
    <property type="project" value="UniProtKB-KW"/>
</dbReference>
<keyword id="KW-0053">Apoptosis</keyword>
<keyword id="KW-0903">Direct protein sequencing</keyword>
<keyword id="KW-1015">Disulfide bond</keyword>
<keyword id="KW-0325">Glycoprotein</keyword>
<keyword id="KW-0800">Toxin</keyword>
<name>ARALB_ARAEL</name>
<proteinExistence type="evidence at protein level"/>
<reference evidence="4" key="1">
    <citation type="journal article" date="2003" name="Cancer Lett.">
        <title>Aralin, a new cytotoxic protein from Aralia elata, inducing apoptosis in human cancer cells.</title>
        <authorList>
            <person name="Tomatsu M."/>
            <person name="Ohnishi-Kameyama M."/>
            <person name="Shibamoto N."/>
        </authorList>
    </citation>
    <scope>PROTEIN SEQUENCE</scope>
    <scope>FUNCTION</scope>
    <scope>SUBUNIT</scope>
    <scope>GLYCOSYLATION</scope>
    <source>
        <tissue evidence="1">Shoot</tissue>
    </source>
</reference>
<reference key="2">
    <citation type="journal article" date="2004" name="Planta Med.">
        <title>Production of aralin, a selective cytotoxic lectin against human transformed cells, in callus culture of Aralia elata.</title>
        <authorList>
            <person name="Tomatsu M."/>
            <person name="Mujin T."/>
            <person name="Shibamoto N."/>
            <person name="Tashiro F."/>
            <person name="Ikuta A."/>
        </authorList>
    </citation>
    <scope>PROTEIN SEQUENCE OF N-TERMINUS</scope>
    <scope>CHARACTERIZATION</scope>
</reference>
<reference key="3">
    <citation type="journal article" date="2004" name="Biol. Chem.">
        <title>An apoptotic inducer, aralin, is a novel type II ribosome-inactivating protein from Aralia elata.</title>
        <authorList>
            <person name="Tomatsu M."/>
            <person name="Kondo T."/>
            <person name="Yoshikawa T."/>
            <person name="Komeno T."/>
            <person name="Adachi N."/>
            <person name="Kawasaki Y."/>
            <person name="Ikuta A."/>
            <person name="Tashiro F."/>
        </authorList>
    </citation>
    <scope>FUNCTION</scope>
</reference>
<comment type="function">
    <text evidence="1 2">Lectin specific for galactose (Gal) and its derivatives. Induces apoptosis. Has cytotoxic activity against several human cancer cell lines. Is less cytotoxic to normal human cells.</text>
</comment>
<comment type="subunit">
    <text evidence="1">Disulfide-linked dimer of A and B chains.</text>
</comment>
<comment type="PTM">
    <text evidence="1">Glycosylated. High-mannose type oligosaccharides.</text>
</comment>
<comment type="miscellaneous">
    <text>Cytotoxic activity repressed by addition of Gal and its derivatives. Melibiose preferentially protects normal cells from apoptosis as compared with transformed cells. The inhibitory concentration 50% (IC50) is 0.8 ng/ml for transformed cells and 10 ng/ml for normal cells.</text>
</comment>
<feature type="chain" id="PRO_0000221397" description="Aralin B chain">
    <location>
        <begin position="1"/>
        <end position="26" status="greater than"/>
    </location>
</feature>
<feature type="non-terminal residue" evidence="3">
    <location>
        <position position="26"/>
    </location>
</feature>
<organism evidence="4">
    <name type="scientific">Aralia elata</name>
    <name type="common">Japanese angelica tree</name>
    <dbReference type="NCBI Taxonomy" id="82095"/>
    <lineage>
        <taxon>Eukaryota</taxon>
        <taxon>Viridiplantae</taxon>
        <taxon>Streptophyta</taxon>
        <taxon>Embryophyta</taxon>
        <taxon>Tracheophyta</taxon>
        <taxon>Spermatophyta</taxon>
        <taxon>Magnoliopsida</taxon>
        <taxon>eudicotyledons</taxon>
        <taxon>Gunneridae</taxon>
        <taxon>Pentapetalae</taxon>
        <taxon>asterids</taxon>
        <taxon>campanulids</taxon>
        <taxon>Apiales</taxon>
        <taxon>Araliaceae</taxon>
        <taxon>Aralia</taxon>
    </lineage>
</organism>
<protein>
    <recommendedName>
        <fullName>Aralin B chain</fullName>
    </recommendedName>
</protein>
<accession>P83573</accession>
<evidence type="ECO:0000269" key="1">
    <source>
    </source>
</evidence>
<evidence type="ECO:0000269" key="2">
    <source>
    </source>
</evidence>
<evidence type="ECO:0000303" key="3">
    <source>
    </source>
</evidence>
<evidence type="ECO:0000305" key="4"/>